<organism>
    <name type="scientific">Burkholderia pseudomallei (strain 1710b)</name>
    <dbReference type="NCBI Taxonomy" id="320372"/>
    <lineage>
        <taxon>Bacteria</taxon>
        <taxon>Pseudomonadati</taxon>
        <taxon>Pseudomonadota</taxon>
        <taxon>Betaproteobacteria</taxon>
        <taxon>Burkholderiales</taxon>
        <taxon>Burkholderiaceae</taxon>
        <taxon>Burkholderia</taxon>
        <taxon>pseudomallei group</taxon>
    </lineage>
</organism>
<proteinExistence type="inferred from homology"/>
<name>KDPC_BURP1</name>
<keyword id="KW-0067">ATP-binding</keyword>
<keyword id="KW-0997">Cell inner membrane</keyword>
<keyword id="KW-1003">Cell membrane</keyword>
<keyword id="KW-0406">Ion transport</keyword>
<keyword id="KW-0472">Membrane</keyword>
<keyword id="KW-0547">Nucleotide-binding</keyword>
<keyword id="KW-0630">Potassium</keyword>
<keyword id="KW-0633">Potassium transport</keyword>
<keyword id="KW-0812">Transmembrane</keyword>
<keyword id="KW-1133">Transmembrane helix</keyword>
<keyword id="KW-0813">Transport</keyword>
<gene>
    <name evidence="1" type="primary">kdpC</name>
    <name type="ordered locus">BURPS1710b_1395</name>
</gene>
<evidence type="ECO:0000255" key="1">
    <source>
        <dbReference type="HAMAP-Rule" id="MF_00276"/>
    </source>
</evidence>
<feature type="chain" id="PRO_1000022274" description="Potassium-transporting ATPase KdpC subunit">
    <location>
        <begin position="1"/>
        <end position="193"/>
    </location>
</feature>
<feature type="transmembrane region" description="Helical" evidence="1">
    <location>
        <begin position="7"/>
        <end position="27"/>
    </location>
</feature>
<comment type="function">
    <text evidence="1">Part of the high-affinity ATP-driven potassium transport (or Kdp) system, which catalyzes the hydrolysis of ATP coupled with the electrogenic transport of potassium into the cytoplasm. This subunit acts as a catalytic chaperone that increases the ATP-binding affinity of the ATP-hydrolyzing subunit KdpB by the formation of a transient KdpB/KdpC/ATP ternary complex.</text>
</comment>
<comment type="subunit">
    <text evidence="1">The system is composed of three essential subunits: KdpA, KdpB and KdpC.</text>
</comment>
<comment type="subcellular location">
    <subcellularLocation>
        <location evidence="1">Cell inner membrane</location>
        <topology evidence="1">Single-pass membrane protein</topology>
    </subcellularLocation>
</comment>
<comment type="similarity">
    <text evidence="1">Belongs to the KdpC family.</text>
</comment>
<reference key="1">
    <citation type="journal article" date="2010" name="Genome Biol. Evol.">
        <title>Continuing evolution of Burkholderia mallei through genome reduction and large-scale rearrangements.</title>
        <authorList>
            <person name="Losada L."/>
            <person name="Ronning C.M."/>
            <person name="DeShazer D."/>
            <person name="Woods D."/>
            <person name="Fedorova N."/>
            <person name="Kim H.S."/>
            <person name="Shabalina S.A."/>
            <person name="Pearson T.R."/>
            <person name="Brinkac L."/>
            <person name="Tan P."/>
            <person name="Nandi T."/>
            <person name="Crabtree J."/>
            <person name="Badger J."/>
            <person name="Beckstrom-Sternberg S."/>
            <person name="Saqib M."/>
            <person name="Schutzer S.E."/>
            <person name="Keim P."/>
            <person name="Nierman W.C."/>
        </authorList>
    </citation>
    <scope>NUCLEOTIDE SEQUENCE [LARGE SCALE GENOMIC DNA]</scope>
    <source>
        <strain>1710b</strain>
    </source>
</reference>
<dbReference type="EMBL" id="CP000124">
    <property type="protein sequence ID" value="ABA48195.1"/>
    <property type="molecule type" value="Genomic_DNA"/>
</dbReference>
<dbReference type="RefSeq" id="WP_004186443.1">
    <property type="nucleotide sequence ID" value="NC_007434.1"/>
</dbReference>
<dbReference type="SMR" id="Q3JUE8"/>
<dbReference type="EnsemblBacteria" id="ABA48195">
    <property type="protein sequence ID" value="ABA48195"/>
    <property type="gene ID" value="BURPS1710b_1395"/>
</dbReference>
<dbReference type="GeneID" id="93059654"/>
<dbReference type="KEGG" id="bpm:BURPS1710b_1395"/>
<dbReference type="HOGENOM" id="CLU_077094_2_0_4"/>
<dbReference type="Proteomes" id="UP000002700">
    <property type="component" value="Chromosome I"/>
</dbReference>
<dbReference type="GO" id="GO:0005886">
    <property type="term" value="C:plasma membrane"/>
    <property type="evidence" value="ECO:0007669"/>
    <property type="project" value="UniProtKB-SubCell"/>
</dbReference>
<dbReference type="GO" id="GO:0005524">
    <property type="term" value="F:ATP binding"/>
    <property type="evidence" value="ECO:0007669"/>
    <property type="project" value="UniProtKB-UniRule"/>
</dbReference>
<dbReference type="GO" id="GO:0008556">
    <property type="term" value="F:P-type potassium transmembrane transporter activity"/>
    <property type="evidence" value="ECO:0007669"/>
    <property type="project" value="InterPro"/>
</dbReference>
<dbReference type="HAMAP" id="MF_00276">
    <property type="entry name" value="KdpC"/>
    <property type="match status" value="1"/>
</dbReference>
<dbReference type="InterPro" id="IPR003820">
    <property type="entry name" value="KdpC"/>
</dbReference>
<dbReference type="NCBIfam" id="TIGR00681">
    <property type="entry name" value="kdpC"/>
    <property type="match status" value="1"/>
</dbReference>
<dbReference type="NCBIfam" id="NF001454">
    <property type="entry name" value="PRK00315.1"/>
    <property type="match status" value="1"/>
</dbReference>
<dbReference type="PANTHER" id="PTHR30042">
    <property type="entry name" value="POTASSIUM-TRANSPORTING ATPASE C CHAIN"/>
    <property type="match status" value="1"/>
</dbReference>
<dbReference type="PANTHER" id="PTHR30042:SF2">
    <property type="entry name" value="POTASSIUM-TRANSPORTING ATPASE KDPC SUBUNIT"/>
    <property type="match status" value="1"/>
</dbReference>
<dbReference type="Pfam" id="PF02669">
    <property type="entry name" value="KdpC"/>
    <property type="match status" value="1"/>
</dbReference>
<dbReference type="PIRSF" id="PIRSF001296">
    <property type="entry name" value="K_ATPase_KdpC"/>
    <property type="match status" value="1"/>
</dbReference>
<accession>Q3JUE8</accession>
<protein>
    <recommendedName>
        <fullName evidence="1">Potassium-transporting ATPase KdpC subunit</fullName>
    </recommendedName>
    <alternativeName>
        <fullName evidence="1">ATP phosphohydrolase [potassium-transporting] C chain</fullName>
    </alternativeName>
    <alternativeName>
        <fullName evidence="1">Potassium-binding and translocating subunit C</fullName>
    </alternativeName>
    <alternativeName>
        <fullName evidence="1">Potassium-translocating ATPase C chain</fullName>
    </alternativeName>
</protein>
<sequence>MKSLFRPLIVVFVVLVAVTGLAYPAVMTVFGQAVFPAQANGSLIEKGGRVVGSALIGQQFDAPQYFWGRLSATSPMPYNAAGSGGSNLGPLNPALKDQVKSRLDALKAAGTDLSQPVPVDLVTASASGLDPEISPAAADYQVARVARARKMADADVRRLVADHTSGRQFGVLGEPRVNVLKLNLALDAAQAAH</sequence>